<keyword id="KW-0067">ATP-binding</keyword>
<keyword id="KW-0997">Cell inner membrane</keyword>
<keyword id="KW-1003">Cell membrane</keyword>
<keyword id="KW-0201">Cytochrome c-type biogenesis</keyword>
<keyword id="KW-0472">Membrane</keyword>
<keyword id="KW-0547">Nucleotide-binding</keyword>
<keyword id="KW-1278">Translocase</keyword>
<keyword id="KW-0813">Transport</keyword>
<organism>
    <name type="scientific">Histophilus somni (strain 129Pt)</name>
    <name type="common">Haemophilus somnus</name>
    <dbReference type="NCBI Taxonomy" id="205914"/>
    <lineage>
        <taxon>Bacteria</taxon>
        <taxon>Pseudomonadati</taxon>
        <taxon>Pseudomonadota</taxon>
        <taxon>Gammaproteobacteria</taxon>
        <taxon>Pasteurellales</taxon>
        <taxon>Pasteurellaceae</taxon>
        <taxon>Histophilus</taxon>
    </lineage>
</organism>
<accession>Q0I2G0</accession>
<dbReference type="EC" id="7.6.2.5" evidence="1"/>
<dbReference type="EMBL" id="CP000436">
    <property type="protein sequence ID" value="ABI24671.1"/>
    <property type="molecule type" value="Genomic_DNA"/>
</dbReference>
<dbReference type="SMR" id="Q0I2G0"/>
<dbReference type="KEGG" id="hso:HS_0393"/>
<dbReference type="eggNOG" id="COG4133">
    <property type="taxonomic scope" value="Bacteria"/>
</dbReference>
<dbReference type="HOGENOM" id="CLU_000604_1_2_6"/>
<dbReference type="GO" id="GO:0005886">
    <property type="term" value="C:plasma membrane"/>
    <property type="evidence" value="ECO:0007669"/>
    <property type="project" value="UniProtKB-SubCell"/>
</dbReference>
<dbReference type="GO" id="GO:0015439">
    <property type="term" value="F:ABC-type heme transporter activity"/>
    <property type="evidence" value="ECO:0007669"/>
    <property type="project" value="UniProtKB-EC"/>
</dbReference>
<dbReference type="GO" id="GO:0005524">
    <property type="term" value="F:ATP binding"/>
    <property type="evidence" value="ECO:0007669"/>
    <property type="project" value="UniProtKB-KW"/>
</dbReference>
<dbReference type="GO" id="GO:0016887">
    <property type="term" value="F:ATP hydrolysis activity"/>
    <property type="evidence" value="ECO:0007669"/>
    <property type="project" value="InterPro"/>
</dbReference>
<dbReference type="GO" id="GO:0017004">
    <property type="term" value="P:cytochrome complex assembly"/>
    <property type="evidence" value="ECO:0007669"/>
    <property type="project" value="UniProtKB-KW"/>
</dbReference>
<dbReference type="Gene3D" id="3.40.50.300">
    <property type="entry name" value="P-loop containing nucleotide triphosphate hydrolases"/>
    <property type="match status" value="1"/>
</dbReference>
<dbReference type="InterPro" id="IPR003593">
    <property type="entry name" value="AAA+_ATPase"/>
</dbReference>
<dbReference type="InterPro" id="IPR003439">
    <property type="entry name" value="ABC_transporter-like_ATP-bd"/>
</dbReference>
<dbReference type="InterPro" id="IPR017871">
    <property type="entry name" value="ABC_transporter-like_CS"/>
</dbReference>
<dbReference type="InterPro" id="IPR005895">
    <property type="entry name" value="ABC_transptr_haem_export_CcmA"/>
</dbReference>
<dbReference type="InterPro" id="IPR027417">
    <property type="entry name" value="P-loop_NTPase"/>
</dbReference>
<dbReference type="NCBIfam" id="TIGR01189">
    <property type="entry name" value="ccmA"/>
    <property type="match status" value="1"/>
</dbReference>
<dbReference type="NCBIfam" id="NF010061">
    <property type="entry name" value="PRK13538.1"/>
    <property type="match status" value="1"/>
</dbReference>
<dbReference type="PANTHER" id="PTHR43499">
    <property type="entry name" value="ABC TRANSPORTER I FAMILY MEMBER 1"/>
    <property type="match status" value="1"/>
</dbReference>
<dbReference type="PANTHER" id="PTHR43499:SF1">
    <property type="entry name" value="ABC TRANSPORTER I FAMILY MEMBER 1"/>
    <property type="match status" value="1"/>
</dbReference>
<dbReference type="Pfam" id="PF00005">
    <property type="entry name" value="ABC_tran"/>
    <property type="match status" value="1"/>
</dbReference>
<dbReference type="SMART" id="SM00382">
    <property type="entry name" value="AAA"/>
    <property type="match status" value="1"/>
</dbReference>
<dbReference type="SUPFAM" id="SSF52540">
    <property type="entry name" value="P-loop containing nucleoside triphosphate hydrolases"/>
    <property type="match status" value="1"/>
</dbReference>
<dbReference type="PROSITE" id="PS00211">
    <property type="entry name" value="ABC_TRANSPORTER_1"/>
    <property type="match status" value="1"/>
</dbReference>
<dbReference type="PROSITE" id="PS50893">
    <property type="entry name" value="ABC_TRANSPORTER_2"/>
    <property type="match status" value="1"/>
</dbReference>
<dbReference type="PROSITE" id="PS51243">
    <property type="entry name" value="CCMA"/>
    <property type="match status" value="1"/>
</dbReference>
<comment type="function">
    <text evidence="1">Part of the ABC transporter complex CcmAB involved in the biogenesis of c-type cytochromes; once thought to export heme, this seems not to be the case, but its exact role is uncertain. Responsible for energy coupling to the transport system.</text>
</comment>
<comment type="catalytic activity">
    <reaction evidence="1">
        <text>heme b(in) + ATP + H2O = heme b(out) + ADP + phosphate + H(+)</text>
        <dbReference type="Rhea" id="RHEA:19261"/>
        <dbReference type="ChEBI" id="CHEBI:15377"/>
        <dbReference type="ChEBI" id="CHEBI:15378"/>
        <dbReference type="ChEBI" id="CHEBI:30616"/>
        <dbReference type="ChEBI" id="CHEBI:43474"/>
        <dbReference type="ChEBI" id="CHEBI:60344"/>
        <dbReference type="ChEBI" id="CHEBI:456216"/>
        <dbReference type="EC" id="7.6.2.5"/>
    </reaction>
</comment>
<comment type="subunit">
    <text evidence="1">The complex is composed of two ATP-binding proteins (CcmA) and two transmembrane proteins (CcmB).</text>
</comment>
<comment type="subcellular location">
    <subcellularLocation>
        <location evidence="1">Cell inner membrane</location>
        <topology evidence="1">Peripheral membrane protein</topology>
    </subcellularLocation>
</comment>
<comment type="similarity">
    <text evidence="1">Belongs to the ABC transporter superfamily. CcmA exporter (TC 3.A.1.107) family.</text>
</comment>
<feature type="chain" id="PRO_0000271927" description="Cytochrome c biogenesis ATP-binding export protein CcmA">
    <location>
        <begin position="1"/>
        <end position="217"/>
    </location>
</feature>
<feature type="domain" description="ABC transporter" evidence="1">
    <location>
        <begin position="6"/>
        <end position="216"/>
    </location>
</feature>
<feature type="binding site" evidence="1">
    <location>
        <begin position="38"/>
        <end position="45"/>
    </location>
    <ligand>
        <name>ATP</name>
        <dbReference type="ChEBI" id="CHEBI:30616"/>
    </ligand>
</feature>
<sequence length="217" mass="24681">MQNNHLQLEQLACQRGDKILFTDLNLDAKSGDFVQIEGHNGIGKTSLLRIIVGLSFPAKGKVRWNKIEINKNREEYQHNLLYLGHLAGIKPELSAWENLQFYQKIGNCRQSEELLWDILQKVGLLGREDLPAGQLSAGQQKRIALARLWLSNAALWILDEPFTAIDKQGVNVLTQLFEQHVENGGIVILTSHQEIPSNKLQKVRLDQYKFFDQGNMA</sequence>
<reference key="1">
    <citation type="journal article" date="2007" name="J. Bacteriol.">
        <title>Complete genome sequence of Haemophilus somnus (Histophilus somni) strain 129Pt and comparison to Haemophilus ducreyi 35000HP and Haemophilus influenzae Rd.</title>
        <authorList>
            <person name="Challacombe J.F."/>
            <person name="Duncan A.J."/>
            <person name="Brettin T.S."/>
            <person name="Bruce D."/>
            <person name="Chertkov O."/>
            <person name="Detter J.C."/>
            <person name="Han C.S."/>
            <person name="Misra M."/>
            <person name="Richardson P."/>
            <person name="Tapia R."/>
            <person name="Thayer N."/>
            <person name="Xie G."/>
            <person name="Inzana T.J."/>
        </authorList>
    </citation>
    <scope>NUCLEOTIDE SEQUENCE [LARGE SCALE GENOMIC DNA]</scope>
    <source>
        <strain>129Pt</strain>
    </source>
</reference>
<protein>
    <recommendedName>
        <fullName evidence="1">Cytochrome c biogenesis ATP-binding export protein CcmA</fullName>
        <ecNumber evidence="1">7.6.2.5</ecNumber>
    </recommendedName>
    <alternativeName>
        <fullName evidence="1">Heme exporter protein A</fullName>
    </alternativeName>
</protein>
<name>CCMA_HISS1</name>
<gene>
    <name evidence="1" type="primary">ccmA</name>
    <name type="ordered locus">HS_0393</name>
</gene>
<proteinExistence type="inferred from homology"/>
<evidence type="ECO:0000255" key="1">
    <source>
        <dbReference type="HAMAP-Rule" id="MF_01707"/>
    </source>
</evidence>